<keyword id="KW-0479">Metal-binding</keyword>
<keyword id="KW-0560">Oxidoreductase</keyword>
<keyword id="KW-0862">Zinc</keyword>
<name>MSRB_ESCF3</name>
<sequence length="137" mass="15463">MANKPSVDDLKENLSEMQFYVTQKHGTEPPYTGRLLHNKRDGVYRCLVCDTPLFNSQSKYDSGCGWPSFYEPVNENSIRYLTDLSHGMERIEIRCGHCDAHLGHVFPDGPQPTGERYCVNSASLSFTDEKSGDQIKG</sequence>
<protein>
    <recommendedName>
        <fullName evidence="1">Peptide methionine sulfoxide reductase MsrB</fullName>
        <ecNumber evidence="1">1.8.4.12</ecNumber>
    </recommendedName>
    <alternativeName>
        <fullName evidence="1">Peptide-methionine (R)-S-oxide reductase</fullName>
    </alternativeName>
</protein>
<proteinExistence type="inferred from homology"/>
<accession>B7LQ21</accession>
<dbReference type="EC" id="1.8.4.12" evidence="1"/>
<dbReference type="EMBL" id="CU928158">
    <property type="protein sequence ID" value="CAQ88818.1"/>
    <property type="molecule type" value="Genomic_DNA"/>
</dbReference>
<dbReference type="RefSeq" id="WP_001284627.1">
    <property type="nucleotide sequence ID" value="NC_011740.1"/>
</dbReference>
<dbReference type="SMR" id="B7LQ21"/>
<dbReference type="GeneID" id="75057661"/>
<dbReference type="KEGG" id="efe:EFER_1294"/>
<dbReference type="HOGENOM" id="CLU_031040_8_5_6"/>
<dbReference type="OrthoDB" id="9785497at2"/>
<dbReference type="Proteomes" id="UP000000745">
    <property type="component" value="Chromosome"/>
</dbReference>
<dbReference type="GO" id="GO:0005737">
    <property type="term" value="C:cytoplasm"/>
    <property type="evidence" value="ECO:0007669"/>
    <property type="project" value="TreeGrafter"/>
</dbReference>
<dbReference type="GO" id="GO:0033743">
    <property type="term" value="F:peptide-methionine (R)-S-oxide reductase activity"/>
    <property type="evidence" value="ECO:0007669"/>
    <property type="project" value="UniProtKB-UniRule"/>
</dbReference>
<dbReference type="GO" id="GO:0008270">
    <property type="term" value="F:zinc ion binding"/>
    <property type="evidence" value="ECO:0007669"/>
    <property type="project" value="UniProtKB-UniRule"/>
</dbReference>
<dbReference type="GO" id="GO:0030091">
    <property type="term" value="P:protein repair"/>
    <property type="evidence" value="ECO:0007669"/>
    <property type="project" value="InterPro"/>
</dbReference>
<dbReference type="GO" id="GO:0006979">
    <property type="term" value="P:response to oxidative stress"/>
    <property type="evidence" value="ECO:0007669"/>
    <property type="project" value="InterPro"/>
</dbReference>
<dbReference type="FunFam" id="2.170.150.20:FF:000001">
    <property type="entry name" value="Peptide methionine sulfoxide reductase MsrB"/>
    <property type="match status" value="1"/>
</dbReference>
<dbReference type="Gene3D" id="2.170.150.20">
    <property type="entry name" value="Peptide methionine sulfoxide reductase"/>
    <property type="match status" value="1"/>
</dbReference>
<dbReference type="HAMAP" id="MF_01400">
    <property type="entry name" value="MsrB"/>
    <property type="match status" value="1"/>
</dbReference>
<dbReference type="InterPro" id="IPR028427">
    <property type="entry name" value="Met_Sox_Rdtase_MsrB"/>
</dbReference>
<dbReference type="InterPro" id="IPR002579">
    <property type="entry name" value="Met_Sox_Rdtase_MsrB_dom"/>
</dbReference>
<dbReference type="InterPro" id="IPR011057">
    <property type="entry name" value="Mss4-like_sf"/>
</dbReference>
<dbReference type="NCBIfam" id="TIGR00357">
    <property type="entry name" value="peptide-methionine (R)-S-oxide reductase MsrB"/>
    <property type="match status" value="1"/>
</dbReference>
<dbReference type="PANTHER" id="PTHR10173">
    <property type="entry name" value="METHIONINE SULFOXIDE REDUCTASE"/>
    <property type="match status" value="1"/>
</dbReference>
<dbReference type="PANTHER" id="PTHR10173:SF52">
    <property type="entry name" value="METHIONINE-R-SULFOXIDE REDUCTASE B1"/>
    <property type="match status" value="1"/>
</dbReference>
<dbReference type="Pfam" id="PF01641">
    <property type="entry name" value="SelR"/>
    <property type="match status" value="1"/>
</dbReference>
<dbReference type="SUPFAM" id="SSF51316">
    <property type="entry name" value="Mss4-like"/>
    <property type="match status" value="1"/>
</dbReference>
<dbReference type="PROSITE" id="PS51790">
    <property type="entry name" value="MSRB"/>
    <property type="match status" value="1"/>
</dbReference>
<feature type="chain" id="PRO_1000145373" description="Peptide methionine sulfoxide reductase MsrB">
    <location>
        <begin position="1"/>
        <end position="137"/>
    </location>
</feature>
<feature type="domain" description="MsrB" evidence="2">
    <location>
        <begin position="7"/>
        <end position="129"/>
    </location>
</feature>
<feature type="active site" description="Nucleophile" evidence="2">
    <location>
        <position position="118"/>
    </location>
</feature>
<feature type="binding site" evidence="2">
    <location>
        <position position="46"/>
    </location>
    <ligand>
        <name>Zn(2+)</name>
        <dbReference type="ChEBI" id="CHEBI:29105"/>
    </ligand>
</feature>
<feature type="binding site" evidence="2">
    <location>
        <position position="49"/>
    </location>
    <ligand>
        <name>Zn(2+)</name>
        <dbReference type="ChEBI" id="CHEBI:29105"/>
    </ligand>
</feature>
<feature type="binding site" evidence="2">
    <location>
        <position position="95"/>
    </location>
    <ligand>
        <name>Zn(2+)</name>
        <dbReference type="ChEBI" id="CHEBI:29105"/>
    </ligand>
</feature>
<feature type="binding site" evidence="2">
    <location>
        <position position="98"/>
    </location>
    <ligand>
        <name>Zn(2+)</name>
        <dbReference type="ChEBI" id="CHEBI:29105"/>
    </ligand>
</feature>
<reference key="1">
    <citation type="journal article" date="2009" name="PLoS Genet.">
        <title>Organised genome dynamics in the Escherichia coli species results in highly diverse adaptive paths.</title>
        <authorList>
            <person name="Touchon M."/>
            <person name="Hoede C."/>
            <person name="Tenaillon O."/>
            <person name="Barbe V."/>
            <person name="Baeriswyl S."/>
            <person name="Bidet P."/>
            <person name="Bingen E."/>
            <person name="Bonacorsi S."/>
            <person name="Bouchier C."/>
            <person name="Bouvet O."/>
            <person name="Calteau A."/>
            <person name="Chiapello H."/>
            <person name="Clermont O."/>
            <person name="Cruveiller S."/>
            <person name="Danchin A."/>
            <person name="Diard M."/>
            <person name="Dossat C."/>
            <person name="Karoui M.E."/>
            <person name="Frapy E."/>
            <person name="Garry L."/>
            <person name="Ghigo J.M."/>
            <person name="Gilles A.M."/>
            <person name="Johnson J."/>
            <person name="Le Bouguenec C."/>
            <person name="Lescat M."/>
            <person name="Mangenot S."/>
            <person name="Martinez-Jehanne V."/>
            <person name="Matic I."/>
            <person name="Nassif X."/>
            <person name="Oztas S."/>
            <person name="Petit M.A."/>
            <person name="Pichon C."/>
            <person name="Rouy Z."/>
            <person name="Ruf C.S."/>
            <person name="Schneider D."/>
            <person name="Tourret J."/>
            <person name="Vacherie B."/>
            <person name="Vallenet D."/>
            <person name="Medigue C."/>
            <person name="Rocha E.P.C."/>
            <person name="Denamur E."/>
        </authorList>
    </citation>
    <scope>NUCLEOTIDE SEQUENCE [LARGE SCALE GENOMIC DNA]</scope>
    <source>
        <strain>ATCC 35469 / DSM 13698 / BCRC 15582 / CCUG 18766 / IAM 14443 / JCM 21226 / LMG 7866 / NBRC 102419 / NCTC 12128 / CDC 0568-73</strain>
    </source>
</reference>
<comment type="catalytic activity">
    <reaction evidence="1">
        <text>L-methionyl-[protein] + [thioredoxin]-disulfide + H2O = L-methionyl-(R)-S-oxide-[protein] + [thioredoxin]-dithiol</text>
        <dbReference type="Rhea" id="RHEA:24164"/>
        <dbReference type="Rhea" id="RHEA-COMP:10698"/>
        <dbReference type="Rhea" id="RHEA-COMP:10700"/>
        <dbReference type="Rhea" id="RHEA-COMP:12313"/>
        <dbReference type="Rhea" id="RHEA-COMP:12314"/>
        <dbReference type="ChEBI" id="CHEBI:15377"/>
        <dbReference type="ChEBI" id="CHEBI:16044"/>
        <dbReference type="ChEBI" id="CHEBI:29950"/>
        <dbReference type="ChEBI" id="CHEBI:45764"/>
        <dbReference type="ChEBI" id="CHEBI:50058"/>
        <dbReference type="EC" id="1.8.4.12"/>
    </reaction>
</comment>
<comment type="cofactor">
    <cofactor evidence="1">
        <name>Zn(2+)</name>
        <dbReference type="ChEBI" id="CHEBI:29105"/>
    </cofactor>
    <text evidence="1">Binds 1 zinc ion per subunit. The zinc ion is important for the structural integrity of the protein.</text>
</comment>
<comment type="similarity">
    <text evidence="1">Belongs to the MsrB Met sulfoxide reductase family.</text>
</comment>
<gene>
    <name evidence="1" type="primary">msrB</name>
    <name type="ordered locus">EFER_1294</name>
</gene>
<evidence type="ECO:0000255" key="1">
    <source>
        <dbReference type="HAMAP-Rule" id="MF_01400"/>
    </source>
</evidence>
<evidence type="ECO:0000255" key="2">
    <source>
        <dbReference type="PROSITE-ProRule" id="PRU01126"/>
    </source>
</evidence>
<organism>
    <name type="scientific">Escherichia fergusonii (strain ATCC 35469 / DSM 13698 / CCUG 18766 / IAM 14443 / JCM 21226 / LMG 7866 / NBRC 102419 / NCTC 12128 / CDC 0568-73)</name>
    <dbReference type="NCBI Taxonomy" id="585054"/>
    <lineage>
        <taxon>Bacteria</taxon>
        <taxon>Pseudomonadati</taxon>
        <taxon>Pseudomonadota</taxon>
        <taxon>Gammaproteobacteria</taxon>
        <taxon>Enterobacterales</taxon>
        <taxon>Enterobacteriaceae</taxon>
        <taxon>Escherichia</taxon>
    </lineage>
</organism>